<dbReference type="EMBL" id="CP001138">
    <property type="protein sequence ID" value="ACH50859.1"/>
    <property type="molecule type" value="Genomic_DNA"/>
</dbReference>
<dbReference type="RefSeq" id="WP_000135199.1">
    <property type="nucleotide sequence ID" value="NC_011149.1"/>
</dbReference>
<dbReference type="SMR" id="B5F3B9"/>
<dbReference type="GeneID" id="98186237"/>
<dbReference type="KEGG" id="sea:SeAg_B4671"/>
<dbReference type="HOGENOM" id="CLU_148710_2_3_6"/>
<dbReference type="Proteomes" id="UP000008819">
    <property type="component" value="Chromosome"/>
</dbReference>
<dbReference type="GO" id="GO:0022627">
    <property type="term" value="C:cytosolic small ribosomal subunit"/>
    <property type="evidence" value="ECO:0007669"/>
    <property type="project" value="TreeGrafter"/>
</dbReference>
<dbReference type="GO" id="GO:0070181">
    <property type="term" value="F:small ribosomal subunit rRNA binding"/>
    <property type="evidence" value="ECO:0007669"/>
    <property type="project" value="TreeGrafter"/>
</dbReference>
<dbReference type="GO" id="GO:0003735">
    <property type="term" value="F:structural constituent of ribosome"/>
    <property type="evidence" value="ECO:0007669"/>
    <property type="project" value="InterPro"/>
</dbReference>
<dbReference type="GO" id="GO:0006412">
    <property type="term" value="P:translation"/>
    <property type="evidence" value="ECO:0007669"/>
    <property type="project" value="UniProtKB-UniRule"/>
</dbReference>
<dbReference type="FunFam" id="4.10.640.10:FF:000001">
    <property type="entry name" value="30S ribosomal protein S18"/>
    <property type="match status" value="1"/>
</dbReference>
<dbReference type="Gene3D" id="4.10.640.10">
    <property type="entry name" value="Ribosomal protein S18"/>
    <property type="match status" value="1"/>
</dbReference>
<dbReference type="HAMAP" id="MF_00270">
    <property type="entry name" value="Ribosomal_bS18"/>
    <property type="match status" value="1"/>
</dbReference>
<dbReference type="InterPro" id="IPR001648">
    <property type="entry name" value="Ribosomal_bS18"/>
</dbReference>
<dbReference type="InterPro" id="IPR018275">
    <property type="entry name" value="Ribosomal_bS18_CS"/>
</dbReference>
<dbReference type="InterPro" id="IPR036870">
    <property type="entry name" value="Ribosomal_bS18_sf"/>
</dbReference>
<dbReference type="NCBIfam" id="TIGR00165">
    <property type="entry name" value="S18"/>
    <property type="match status" value="1"/>
</dbReference>
<dbReference type="PANTHER" id="PTHR13479">
    <property type="entry name" value="30S RIBOSOMAL PROTEIN S18"/>
    <property type="match status" value="1"/>
</dbReference>
<dbReference type="PANTHER" id="PTHR13479:SF40">
    <property type="entry name" value="SMALL RIBOSOMAL SUBUNIT PROTEIN BS18M"/>
    <property type="match status" value="1"/>
</dbReference>
<dbReference type="Pfam" id="PF01084">
    <property type="entry name" value="Ribosomal_S18"/>
    <property type="match status" value="1"/>
</dbReference>
<dbReference type="PRINTS" id="PR00974">
    <property type="entry name" value="RIBOSOMALS18"/>
</dbReference>
<dbReference type="SUPFAM" id="SSF46911">
    <property type="entry name" value="Ribosomal protein S18"/>
    <property type="match status" value="1"/>
</dbReference>
<dbReference type="PROSITE" id="PS00057">
    <property type="entry name" value="RIBOSOMAL_S18"/>
    <property type="match status" value="1"/>
</dbReference>
<evidence type="ECO:0000255" key="1">
    <source>
        <dbReference type="HAMAP-Rule" id="MF_00270"/>
    </source>
</evidence>
<evidence type="ECO:0000305" key="2"/>
<organism>
    <name type="scientific">Salmonella agona (strain SL483)</name>
    <dbReference type="NCBI Taxonomy" id="454166"/>
    <lineage>
        <taxon>Bacteria</taxon>
        <taxon>Pseudomonadati</taxon>
        <taxon>Pseudomonadota</taxon>
        <taxon>Gammaproteobacteria</taxon>
        <taxon>Enterobacterales</taxon>
        <taxon>Enterobacteriaceae</taxon>
        <taxon>Salmonella</taxon>
    </lineage>
</organism>
<proteinExistence type="inferred from homology"/>
<name>RS18_SALA4</name>
<reference key="1">
    <citation type="journal article" date="2011" name="J. Bacteriol.">
        <title>Comparative genomics of 28 Salmonella enterica isolates: evidence for CRISPR-mediated adaptive sublineage evolution.</title>
        <authorList>
            <person name="Fricke W.F."/>
            <person name="Mammel M.K."/>
            <person name="McDermott P.F."/>
            <person name="Tartera C."/>
            <person name="White D.G."/>
            <person name="Leclerc J.E."/>
            <person name="Ravel J."/>
            <person name="Cebula T.A."/>
        </authorList>
    </citation>
    <scope>NUCLEOTIDE SEQUENCE [LARGE SCALE GENOMIC DNA]</scope>
    <source>
        <strain>SL483</strain>
    </source>
</reference>
<keyword id="KW-0687">Ribonucleoprotein</keyword>
<keyword id="KW-0689">Ribosomal protein</keyword>
<keyword id="KW-0694">RNA-binding</keyword>
<keyword id="KW-0699">rRNA-binding</keyword>
<gene>
    <name evidence="1" type="primary">rpsR</name>
    <name type="ordered locus">SeAg_B4671</name>
</gene>
<sequence length="75" mass="8986">MARYFRRRKFCRFTAEGVQEIDYKDIATLKNYITESGKIVPSRITGTRAKYQRQLARAIKRARYLSLLPYTDRHQ</sequence>
<feature type="chain" id="PRO_1000114443" description="Small ribosomal subunit protein bS18">
    <location>
        <begin position="1"/>
        <end position="75"/>
    </location>
</feature>
<comment type="function">
    <text evidence="1">Binds as a heterodimer with protein bS6 to the central domain of the 16S rRNA, where it helps stabilize the platform of the 30S subunit.</text>
</comment>
<comment type="subunit">
    <text evidence="1">Part of the 30S ribosomal subunit. Forms a tight heterodimer with protein bS6.</text>
</comment>
<comment type="similarity">
    <text evidence="1">Belongs to the bacterial ribosomal protein bS18 family.</text>
</comment>
<accession>B5F3B9</accession>
<protein>
    <recommendedName>
        <fullName evidence="1">Small ribosomal subunit protein bS18</fullName>
    </recommendedName>
    <alternativeName>
        <fullName evidence="2">30S ribosomal protein S18</fullName>
    </alternativeName>
</protein>